<gene>
    <name type="primary">Si</name>
</gene>
<comment type="function">
    <text>Plays an important role in the final stage of carbohydrate digestion. Isomaltase activity is specific for both alpha-1,4- and alpha-1,6-oligosaccharides.</text>
</comment>
<comment type="catalytic activity">
    <reaction>
        <text>Hydrolysis of sucrose and maltose by an alpha-D-glucosidase-type action.</text>
        <dbReference type="EC" id="3.2.1.48"/>
    </reaction>
</comment>
<comment type="catalytic activity">
    <reaction>
        <text>Hydrolysis of (1-&gt;6)-alpha-D-glucosidic linkages in some oligosaccharides produced from starch and glycogen by alpha-amylase, and in isomaltose.</text>
        <dbReference type="EC" id="3.2.1.10"/>
    </reaction>
</comment>
<comment type="subunit">
    <text>The resulting sucrase and isomaltase subunits stay associated with one another in a complex by non-covalent linkages.</text>
</comment>
<comment type="subcellular location">
    <subcellularLocation>
        <location>Apical cell membrane</location>
        <topology>Single-pass type II membrane protein</topology>
    </subcellularLocation>
    <text>Brush border.</text>
</comment>
<comment type="PTM">
    <text>The precursor is proteolytically cleaved when exposed to pancreatic proteases in the intestinal lumen.</text>
</comment>
<comment type="PTM">
    <text evidence="1">Sulfated.</text>
</comment>
<comment type="miscellaneous">
    <text>There is a high degree of homology between the isomaltase and sucrase portions (41% of amino acid identity) indicating that this protein is evolved by partial gene duplication.</text>
</comment>
<comment type="similarity">
    <text evidence="7">Belongs to the glycosyl hydrolase 31 family.</text>
</comment>
<feature type="chain" id="PRO_0000018559" description="Sucrase-isomaltase, intestinal">
    <location>
        <begin position="1"/>
        <end position="1841"/>
    </location>
</feature>
<feature type="chain" id="PRO_0000018560" description="Isomaltase">
    <location>
        <begin position="1"/>
        <end position="1013"/>
    </location>
</feature>
<feature type="chain" id="PRO_0000018561" description="Sucrase">
    <location>
        <begin position="1014"/>
        <end position="1841"/>
    </location>
</feature>
<feature type="topological domain" description="Cytoplasmic" evidence="3">
    <location>
        <begin position="1"/>
        <end position="12"/>
    </location>
</feature>
<feature type="transmembrane region" description="Helical; Signal-anchor for type II membrane protein" evidence="3">
    <location>
        <begin position="13"/>
        <end position="32"/>
    </location>
</feature>
<feature type="topological domain" description="Lumenal" evidence="3">
    <location>
        <begin position="33"/>
        <end position="1841"/>
    </location>
</feature>
<feature type="domain" description="P-type 1" evidence="4">
    <location>
        <begin position="71"/>
        <end position="120"/>
    </location>
</feature>
<feature type="domain" description="P-type 2" evidence="4">
    <location>
        <begin position="936"/>
        <end position="984"/>
    </location>
</feature>
<feature type="region of interest" description="Disordered" evidence="6">
    <location>
        <begin position="42"/>
        <end position="81"/>
    </location>
</feature>
<feature type="region of interest" description="Isomaltase">
    <location>
        <begin position="120"/>
        <end position="1013"/>
    </location>
</feature>
<feature type="region of interest" description="Sucrase">
    <location>
        <begin position="1014"/>
        <end position="1841"/>
    </location>
</feature>
<feature type="compositionally biased region" description="Low complexity" evidence="6">
    <location>
        <begin position="43"/>
        <end position="70"/>
    </location>
</feature>
<feature type="active site" description="Nucleophile; for isomaltase activity" evidence="5">
    <location>
        <position position="514"/>
    </location>
</feature>
<feature type="active site" description="For isomaltase activity" evidence="1">
    <location>
        <position position="615"/>
    </location>
</feature>
<feature type="active site" description="Nucleophile; for sucrase activity" evidence="5">
    <location>
        <position position="1399"/>
    </location>
</feature>
<feature type="active site" description="For sucrase activity" evidence="1">
    <location>
        <position position="1402"/>
    </location>
</feature>
<feature type="active site" description="Proton donor; for sucrase activity" evidence="1">
    <location>
        <position position="1512"/>
    </location>
</feature>
<feature type="binding site" evidence="1">
    <location>
        <position position="274"/>
    </location>
    <ligand>
        <name>substrate</name>
    </ligand>
</feature>
<feature type="binding site" evidence="1">
    <location>
        <position position="398"/>
    </location>
    <ligand>
        <name>substrate</name>
    </ligand>
</feature>
<feature type="binding site" evidence="1">
    <location>
        <position position="599"/>
    </location>
    <ligand>
        <name>substrate</name>
    </ligand>
</feature>
<feature type="binding site" evidence="1">
    <location>
        <position position="673"/>
    </location>
    <ligand>
        <name>substrate</name>
    </ligand>
</feature>
<feature type="modified residue" description="Phosphoserine; by PKA" evidence="2">
    <location>
        <position position="7"/>
    </location>
</feature>
<feature type="modified residue" description="Sulfotyrosine" evidence="3">
    <location>
        <position position="401"/>
    </location>
</feature>
<feature type="modified residue" description="Sulfotyrosine" evidence="3">
    <location>
        <position position="410"/>
    </location>
</feature>
<feature type="modified residue" description="Sulfotyrosine" evidence="3">
    <location>
        <position position="1387"/>
    </location>
</feature>
<feature type="glycosylation site" description="N-linked (GlcNAc...) asparagine" evidence="3">
    <location>
        <position position="109"/>
    </location>
</feature>
<feature type="glycosylation site" description="N-linked (GlcNAc...) asparagine" evidence="3">
    <location>
        <position position="464"/>
    </location>
</feature>
<feature type="glycosylation site" description="N-linked (GlcNAc...) asparagine" evidence="3">
    <location>
        <position position="758"/>
    </location>
</feature>
<feature type="glycosylation site" description="N-linked (GlcNAc...) asparagine" evidence="3">
    <location>
        <position position="765"/>
    </location>
</feature>
<feature type="glycosylation site" description="N-linked (GlcNAc...) asparagine" evidence="3">
    <location>
        <position position="867"/>
    </location>
</feature>
<feature type="glycosylation site" description="N-linked (GlcNAc...) asparagine" evidence="3">
    <location>
        <position position="910"/>
    </location>
</feature>
<feature type="glycosylation site" description="N-linked (GlcNAc...) asparagine" evidence="3">
    <location>
        <position position="1240"/>
    </location>
</feature>
<feature type="glycosylation site" description="N-linked (GlcNAc...) asparagine" evidence="3">
    <location>
        <position position="1308"/>
    </location>
</feature>
<feature type="glycosylation site" description="N-linked (GlcNAc...) asparagine" evidence="3">
    <location>
        <position position="1345"/>
    </location>
</feature>
<feature type="glycosylation site" description="N-linked (GlcNAc...) asparagine" evidence="3">
    <location>
        <position position="1359"/>
    </location>
</feature>
<feature type="glycosylation site" description="N-linked (GlcNAc...) asparagine" evidence="3">
    <location>
        <position position="1373"/>
    </location>
</feature>
<feature type="glycosylation site" description="N-linked (GlcNAc...) asparagine" evidence="3">
    <location>
        <position position="1485"/>
    </location>
</feature>
<feature type="glycosylation site" description="N-linked (GlcNAc...) asparagine" evidence="3">
    <location>
        <position position="1513"/>
    </location>
</feature>
<feature type="glycosylation site" description="N-linked (GlcNAc...) asparagine" evidence="3">
    <location>
        <position position="1575"/>
    </location>
</feature>
<feature type="glycosylation site" description="N-linked (GlcNAc...) asparagine" evidence="3">
    <location>
        <position position="1762"/>
    </location>
</feature>
<feature type="glycosylation site" description="N-linked (GlcNAc...) asparagine" evidence="3">
    <location>
        <position position="1829"/>
    </location>
</feature>
<feature type="disulfide bond" evidence="4">
    <location>
        <begin position="73"/>
        <end position="104"/>
    </location>
</feature>
<feature type="disulfide bond" evidence="4">
    <location>
        <begin position="87"/>
        <end position="103"/>
    </location>
</feature>
<feature type="disulfide bond" evidence="4">
    <location>
        <begin position="98"/>
        <end position="116"/>
    </location>
</feature>
<feature type="disulfide bond" evidence="4">
    <location>
        <begin position="646"/>
        <end position="657"/>
    </location>
</feature>
<feature type="sequence conflict" description="In Ref. 1; AAA65097." evidence="7" ref="1">
    <original>C</original>
    <variation>W</variation>
    <location>
        <position position="87"/>
    </location>
</feature>
<feature type="sequence conflict" description="In Ref. 2; AAA42144." evidence="7" ref="2">
    <original>H</original>
    <variation>S</variation>
    <location>
        <position position="92"/>
    </location>
</feature>
<feature type="sequence conflict" description="In Ref. 2; AAA42144." evidence="7" ref="2">
    <original>K</original>
    <variation>Q</variation>
    <location>
        <position position="95"/>
    </location>
</feature>
<feature type="sequence conflict" description="In Ref. 3; CAA33552." evidence="7" ref="3">
    <original>E</original>
    <variation>V</variation>
    <location>
        <position position="736"/>
    </location>
</feature>
<feature type="sequence conflict" description="In Ref. 3; CAA33552." evidence="7" ref="3">
    <original>E</original>
    <variation>Q</variation>
    <location>
        <position position="842"/>
    </location>
</feature>
<feature type="sequence conflict" description="In Ref. 3; CAA33552." evidence="7" ref="3">
    <original>A</original>
    <variation>T</variation>
    <location>
        <position position="916"/>
    </location>
</feature>
<feature type="sequence conflict" description="In Ref. 3; CAA33552." evidence="7" ref="3">
    <original>A</original>
    <variation>R</variation>
    <location>
        <position position="924"/>
    </location>
</feature>
<feature type="sequence conflict" description="In Ref. 3; CAA33552." evidence="7" ref="3">
    <original>AG</original>
    <variation>GT</variation>
    <location>
        <begin position="930"/>
        <end position="931"/>
    </location>
</feature>
<feature type="sequence conflict" description="In Ref. 3; CAA33552." evidence="7" ref="3">
    <original>CR</original>
    <variation>SQ</variation>
    <location>
        <begin position="938"/>
        <end position="939"/>
    </location>
</feature>
<feature type="sequence conflict" description="In Ref. 3; CAA33552." evidence="7" ref="3">
    <original>GTCT</original>
    <variation>ETDK</variation>
    <location>
        <begin position="959"/>
        <end position="962"/>
    </location>
</feature>
<feature type="sequence conflict" description="In Ref. 3; CAA33552." evidence="7" ref="3">
    <original>Y</original>
    <variation>C</variation>
    <location>
        <position position="980"/>
    </location>
</feature>
<feature type="sequence conflict" description="In Ref. 3; CAA33552." evidence="7" ref="3">
    <original>N</original>
    <variation>H</variation>
    <location>
        <position position="986"/>
    </location>
</feature>
<feature type="sequence conflict" description="In Ref. 3; CAA33552." evidence="7" ref="3">
    <original>LP</original>
    <variation>SL</variation>
    <location>
        <begin position="997"/>
        <end position="998"/>
    </location>
</feature>
<feature type="sequence conflict" description="In Ref. 3; CAA33552." evidence="7" ref="3">
    <original>P</original>
    <variation>A</variation>
    <location>
        <position position="1010"/>
    </location>
</feature>
<feature type="sequence conflict" description="In Ref. 3; CAA33552." evidence="7" ref="3">
    <original>T</original>
    <variation>P</variation>
    <location>
        <position position="1023"/>
    </location>
</feature>
<feature type="sequence conflict" description="In Ref. 3; CAA33552." evidence="7" ref="3">
    <original>G</original>
    <variation>E</variation>
    <location>
        <position position="1027"/>
    </location>
</feature>
<feature type="sequence conflict" description="In Ref. 3; CAA33552." evidence="7" ref="3">
    <original>P</original>
    <variation>K</variation>
    <location>
        <position position="1032"/>
    </location>
</feature>
<feature type="sequence conflict" description="In Ref. 3; CAA33552." evidence="7" ref="3">
    <original>R</original>
    <variation>S</variation>
    <location>
        <position position="1094"/>
    </location>
</feature>
<feature type="sequence conflict" description="In Ref. 3; CAA33552." evidence="7" ref="3">
    <original>G</original>
    <variation>A</variation>
    <location>
        <position position="1099"/>
    </location>
</feature>
<feature type="sequence conflict" description="In Ref. 3; CAA33552." evidence="7" ref="3">
    <original>A</original>
    <variation>D</variation>
    <location>
        <position position="1302"/>
    </location>
</feature>
<feature type="sequence conflict" description="In Ref. 3; CAA33552." evidence="7" ref="3">
    <original>PKVW</original>
    <variation>AKWG</variation>
    <location>
        <begin position="1337"/>
        <end position="1340"/>
    </location>
</feature>
<keyword id="KW-1003">Cell membrane</keyword>
<keyword id="KW-0903">Direct protein sequencing</keyword>
<keyword id="KW-1015">Disulfide bond</keyword>
<keyword id="KW-0325">Glycoprotein</keyword>
<keyword id="KW-0326">Glycosidase</keyword>
<keyword id="KW-0378">Hydrolase</keyword>
<keyword id="KW-0472">Membrane</keyword>
<keyword id="KW-0511">Multifunctional enzyme</keyword>
<keyword id="KW-0597">Phosphoprotein</keyword>
<keyword id="KW-1185">Reference proteome</keyword>
<keyword id="KW-0677">Repeat</keyword>
<keyword id="KW-0735">Signal-anchor</keyword>
<keyword id="KW-0765">Sulfation</keyword>
<keyword id="KW-0812">Transmembrane</keyword>
<keyword id="KW-1133">Transmembrane helix</keyword>
<name>SUIS_RAT</name>
<dbReference type="EC" id="3.2.1.48"/>
<dbReference type="EC" id="3.2.1.10"/>
<dbReference type="EMBL" id="L25926">
    <property type="protein sequence ID" value="AAA65097.1"/>
    <property type="molecule type" value="mRNA"/>
</dbReference>
<dbReference type="EMBL" id="M62889">
    <property type="protein sequence ID" value="AAA42144.1"/>
    <property type="molecule type" value="mRNA"/>
</dbReference>
<dbReference type="EMBL" id="X15546">
    <property type="protein sequence ID" value="CAA33552.1"/>
    <property type="molecule type" value="mRNA"/>
</dbReference>
<dbReference type="PIR" id="S11386">
    <property type="entry name" value="S11386"/>
</dbReference>
<dbReference type="PIR" id="T10799">
    <property type="entry name" value="T10799"/>
</dbReference>
<dbReference type="RefSeq" id="NP_037193.1">
    <property type="nucleotide sequence ID" value="NM_013061.1"/>
</dbReference>
<dbReference type="SMR" id="P23739"/>
<dbReference type="FunCoup" id="P23739">
    <property type="interactions" value="62"/>
</dbReference>
<dbReference type="STRING" id="10116.ENSRNOP00000045106"/>
<dbReference type="BindingDB" id="P23739"/>
<dbReference type="ChEMBL" id="CHEMBL3114"/>
<dbReference type="DrugCentral" id="P23739"/>
<dbReference type="CAZy" id="GH31">
    <property type="family name" value="Glycoside Hydrolase Family 31"/>
</dbReference>
<dbReference type="GlyCosmos" id="P23739">
    <property type="glycosylation" value="16 sites, No reported glycans"/>
</dbReference>
<dbReference type="GlyGen" id="P23739">
    <property type="glycosylation" value="20 sites"/>
</dbReference>
<dbReference type="iPTMnet" id="P23739"/>
<dbReference type="PhosphoSitePlus" id="P23739"/>
<dbReference type="PaxDb" id="10116-ENSRNOP00000045106"/>
<dbReference type="UCSC" id="RGD:3675">
    <property type="organism name" value="rat"/>
</dbReference>
<dbReference type="AGR" id="RGD:3675"/>
<dbReference type="RGD" id="3675">
    <property type="gene designation" value="Si"/>
</dbReference>
<dbReference type="eggNOG" id="KOG1065">
    <property type="taxonomic scope" value="Eukaryota"/>
</dbReference>
<dbReference type="InParanoid" id="P23739"/>
<dbReference type="PhylomeDB" id="P23739"/>
<dbReference type="BRENDA" id="3.2.1.10">
    <property type="organism ID" value="5301"/>
</dbReference>
<dbReference type="Reactome" id="R-RNO-189085">
    <property type="pathway name" value="Digestion of dietary carbohydrate"/>
</dbReference>
<dbReference type="SABIO-RK" id="P23739"/>
<dbReference type="PRO" id="PR:P23739"/>
<dbReference type="Proteomes" id="UP000002494">
    <property type="component" value="Unplaced"/>
</dbReference>
<dbReference type="GO" id="GO:0016324">
    <property type="term" value="C:apical plasma membrane"/>
    <property type="evidence" value="ECO:0000314"/>
    <property type="project" value="RGD"/>
</dbReference>
<dbReference type="GO" id="GO:0005903">
    <property type="term" value="C:brush border"/>
    <property type="evidence" value="ECO:0000314"/>
    <property type="project" value="RGD"/>
</dbReference>
<dbReference type="GO" id="GO:0031526">
    <property type="term" value="C:brush border membrane"/>
    <property type="evidence" value="ECO:0000314"/>
    <property type="project" value="RGD"/>
</dbReference>
<dbReference type="GO" id="GO:0005783">
    <property type="term" value="C:endoplasmic reticulum"/>
    <property type="evidence" value="ECO:0000314"/>
    <property type="project" value="RGD"/>
</dbReference>
<dbReference type="GO" id="GO:0031985">
    <property type="term" value="C:Golgi cisterna"/>
    <property type="evidence" value="ECO:0000314"/>
    <property type="project" value="RGD"/>
</dbReference>
<dbReference type="GO" id="GO:0016020">
    <property type="term" value="C:membrane"/>
    <property type="evidence" value="ECO:0000266"/>
    <property type="project" value="RGD"/>
</dbReference>
<dbReference type="GO" id="GO:0031528">
    <property type="term" value="C:microvillus membrane"/>
    <property type="evidence" value="ECO:0000314"/>
    <property type="project" value="RGD"/>
</dbReference>
<dbReference type="GO" id="GO:0005771">
    <property type="term" value="C:multivesicular body"/>
    <property type="evidence" value="ECO:0000314"/>
    <property type="project" value="RGD"/>
</dbReference>
<dbReference type="GO" id="GO:0005635">
    <property type="term" value="C:nuclear envelope"/>
    <property type="evidence" value="ECO:0000314"/>
    <property type="project" value="RGD"/>
</dbReference>
<dbReference type="GO" id="GO:0031982">
    <property type="term" value="C:vesicle"/>
    <property type="evidence" value="ECO:0000314"/>
    <property type="project" value="RGD"/>
</dbReference>
<dbReference type="GO" id="GO:0004558">
    <property type="term" value="F:alpha-1,4-glucosidase activity"/>
    <property type="evidence" value="ECO:0000318"/>
    <property type="project" value="GO_Central"/>
</dbReference>
<dbReference type="GO" id="GO:0004564">
    <property type="term" value="F:beta-fructofuranosidase activity"/>
    <property type="evidence" value="ECO:0000314"/>
    <property type="project" value="RGD"/>
</dbReference>
<dbReference type="GO" id="GO:0030246">
    <property type="term" value="F:carbohydrate binding"/>
    <property type="evidence" value="ECO:0007669"/>
    <property type="project" value="InterPro"/>
</dbReference>
<dbReference type="GO" id="GO:0004574">
    <property type="term" value="F:oligo-1,6-glucosidase activity"/>
    <property type="evidence" value="ECO:0000314"/>
    <property type="project" value="RGD"/>
</dbReference>
<dbReference type="GO" id="GO:0004575">
    <property type="term" value="F:sucrose alpha-glucosidase activity"/>
    <property type="evidence" value="ECO:0007669"/>
    <property type="project" value="UniProtKB-EC"/>
</dbReference>
<dbReference type="GO" id="GO:0009758">
    <property type="term" value="P:carbohydrate utilization"/>
    <property type="evidence" value="ECO:0000314"/>
    <property type="project" value="RGD"/>
</dbReference>
<dbReference type="GO" id="GO:0060574">
    <property type="term" value="P:intestinal epithelial cell maturation"/>
    <property type="evidence" value="ECO:0000270"/>
    <property type="project" value="RGD"/>
</dbReference>
<dbReference type="GO" id="GO:0051413">
    <property type="term" value="P:response to cortisone"/>
    <property type="evidence" value="ECO:0000270"/>
    <property type="project" value="RGD"/>
</dbReference>
<dbReference type="GO" id="GO:0032094">
    <property type="term" value="P:response to food"/>
    <property type="evidence" value="ECO:0000270"/>
    <property type="project" value="RGD"/>
</dbReference>
<dbReference type="GO" id="GO:0009750">
    <property type="term" value="P:response to fructose"/>
    <property type="evidence" value="ECO:0000270"/>
    <property type="project" value="RGD"/>
</dbReference>
<dbReference type="GO" id="GO:0051384">
    <property type="term" value="P:response to glucocorticoid"/>
    <property type="evidence" value="ECO:0000270"/>
    <property type="project" value="RGD"/>
</dbReference>
<dbReference type="GO" id="GO:0032868">
    <property type="term" value="P:response to insulin"/>
    <property type="evidence" value="ECO:0000270"/>
    <property type="project" value="RGD"/>
</dbReference>
<dbReference type="GO" id="GO:0014850">
    <property type="term" value="P:response to muscle activity"/>
    <property type="evidence" value="ECO:0000270"/>
    <property type="project" value="RGD"/>
</dbReference>
<dbReference type="GO" id="GO:0007584">
    <property type="term" value="P:response to nutrient"/>
    <property type="evidence" value="ECO:0000270"/>
    <property type="project" value="RGD"/>
</dbReference>
<dbReference type="GO" id="GO:0043434">
    <property type="term" value="P:response to peptide hormone"/>
    <property type="evidence" value="ECO:0000270"/>
    <property type="project" value="RGD"/>
</dbReference>
<dbReference type="GO" id="GO:0042594">
    <property type="term" value="P:response to starvation"/>
    <property type="evidence" value="ECO:0000270"/>
    <property type="project" value="RGD"/>
</dbReference>
<dbReference type="GO" id="GO:0009744">
    <property type="term" value="P:response to sucrose"/>
    <property type="evidence" value="ECO:0000270"/>
    <property type="project" value="RGD"/>
</dbReference>
<dbReference type="GO" id="GO:0034014">
    <property type="term" value="P:response to triglyceride"/>
    <property type="evidence" value="ECO:0000270"/>
    <property type="project" value="RGD"/>
</dbReference>
<dbReference type="GO" id="GO:0033189">
    <property type="term" value="P:response to vitamin A"/>
    <property type="evidence" value="ECO:0000270"/>
    <property type="project" value="RGD"/>
</dbReference>
<dbReference type="GO" id="GO:0005987">
    <property type="term" value="P:sucrose catabolic process"/>
    <property type="evidence" value="ECO:0000266"/>
    <property type="project" value="RGD"/>
</dbReference>
<dbReference type="CDD" id="cd06602">
    <property type="entry name" value="GH31_MGAM_SI_GAA"/>
    <property type="match status" value="2"/>
</dbReference>
<dbReference type="CDD" id="cd14752">
    <property type="entry name" value="GH31_N"/>
    <property type="match status" value="2"/>
</dbReference>
<dbReference type="CDD" id="cd00111">
    <property type="entry name" value="Trefoil"/>
    <property type="match status" value="2"/>
</dbReference>
<dbReference type="FunFam" id="2.60.40.1180:FF:000001">
    <property type="entry name" value="Maltase-glucoamylase, intestinal"/>
    <property type="match status" value="2"/>
</dbReference>
<dbReference type="FunFam" id="2.60.40.1180:FF:000005">
    <property type="entry name" value="Maltase-glucoamylase, intestinal"/>
    <property type="match status" value="2"/>
</dbReference>
<dbReference type="FunFam" id="2.60.40.1760:FF:000001">
    <property type="entry name" value="Maltase-glucoamylase, intestinal"/>
    <property type="match status" value="2"/>
</dbReference>
<dbReference type="FunFam" id="3.20.20.80:FF:000016">
    <property type="entry name" value="Maltase-glucoamylase, intestinal"/>
    <property type="match status" value="2"/>
</dbReference>
<dbReference type="FunFam" id="4.10.110.10:FF:000003">
    <property type="entry name" value="Maltase-glucoamylase, intestinal"/>
    <property type="match status" value="1"/>
</dbReference>
<dbReference type="Gene3D" id="3.20.20.80">
    <property type="entry name" value="Glycosidases"/>
    <property type="match status" value="2"/>
</dbReference>
<dbReference type="Gene3D" id="2.60.40.1760">
    <property type="entry name" value="glycosyl hydrolase (family 31)"/>
    <property type="match status" value="2"/>
</dbReference>
<dbReference type="Gene3D" id="2.60.40.1180">
    <property type="entry name" value="Golgi alpha-mannosidase II"/>
    <property type="match status" value="4"/>
</dbReference>
<dbReference type="Gene3D" id="4.10.110.10">
    <property type="entry name" value="Spasmolytic Protein, domain 1"/>
    <property type="match status" value="2"/>
</dbReference>
<dbReference type="InterPro" id="IPR011013">
    <property type="entry name" value="Gal_mutarotase_sf_dom"/>
</dbReference>
<dbReference type="InterPro" id="IPR030458">
    <property type="entry name" value="Glyco_hydro_31_AS"/>
</dbReference>
<dbReference type="InterPro" id="IPR048395">
    <property type="entry name" value="Glyco_hydro_31_C"/>
</dbReference>
<dbReference type="InterPro" id="IPR030459">
    <property type="entry name" value="Glyco_hydro_31_CS"/>
</dbReference>
<dbReference type="InterPro" id="IPR025887">
    <property type="entry name" value="Glyco_hydro_31_N_dom"/>
</dbReference>
<dbReference type="InterPro" id="IPR000322">
    <property type="entry name" value="Glyco_hydro_31_TIM"/>
</dbReference>
<dbReference type="InterPro" id="IPR013780">
    <property type="entry name" value="Glyco_hydro_b"/>
</dbReference>
<dbReference type="InterPro" id="IPR017853">
    <property type="entry name" value="Glycoside_hydrolase_SF"/>
</dbReference>
<dbReference type="InterPro" id="IPR017957">
    <property type="entry name" value="P_trefoil_CS"/>
</dbReference>
<dbReference type="InterPro" id="IPR000519">
    <property type="entry name" value="P_trefoil_dom"/>
</dbReference>
<dbReference type="InterPro" id="IPR044913">
    <property type="entry name" value="P_trefoil_dom_sf"/>
</dbReference>
<dbReference type="PANTHER" id="PTHR22762">
    <property type="entry name" value="ALPHA-GLUCOSIDASE"/>
    <property type="match status" value="1"/>
</dbReference>
<dbReference type="PANTHER" id="PTHR22762:SF133">
    <property type="entry name" value="P-TYPE DOMAIN-CONTAINING PROTEIN"/>
    <property type="match status" value="1"/>
</dbReference>
<dbReference type="Pfam" id="PF13802">
    <property type="entry name" value="Gal_mutarotas_2"/>
    <property type="match status" value="2"/>
</dbReference>
<dbReference type="Pfam" id="PF01055">
    <property type="entry name" value="Glyco_hydro_31_2nd"/>
    <property type="match status" value="2"/>
</dbReference>
<dbReference type="Pfam" id="PF21365">
    <property type="entry name" value="Glyco_hydro_31_3rd"/>
    <property type="match status" value="2"/>
</dbReference>
<dbReference type="Pfam" id="PF00088">
    <property type="entry name" value="Trefoil"/>
    <property type="match status" value="2"/>
</dbReference>
<dbReference type="SMART" id="SM00018">
    <property type="entry name" value="PD"/>
    <property type="match status" value="2"/>
</dbReference>
<dbReference type="SUPFAM" id="SSF51445">
    <property type="entry name" value="(Trans)glycosidases"/>
    <property type="match status" value="2"/>
</dbReference>
<dbReference type="SUPFAM" id="SSF74650">
    <property type="entry name" value="Galactose mutarotase-like"/>
    <property type="match status" value="2"/>
</dbReference>
<dbReference type="SUPFAM" id="SSF51011">
    <property type="entry name" value="Glycosyl hydrolase domain"/>
    <property type="match status" value="2"/>
</dbReference>
<dbReference type="SUPFAM" id="SSF57492">
    <property type="entry name" value="Trefoil"/>
    <property type="match status" value="1"/>
</dbReference>
<dbReference type="PROSITE" id="PS00129">
    <property type="entry name" value="GLYCOSYL_HYDROL_F31_1"/>
    <property type="match status" value="2"/>
</dbReference>
<dbReference type="PROSITE" id="PS00707">
    <property type="entry name" value="GLYCOSYL_HYDROL_F31_2"/>
    <property type="match status" value="1"/>
</dbReference>
<dbReference type="PROSITE" id="PS00025">
    <property type="entry name" value="P_TREFOIL_1"/>
    <property type="match status" value="1"/>
</dbReference>
<dbReference type="PROSITE" id="PS51448">
    <property type="entry name" value="P_TREFOIL_2"/>
    <property type="match status" value="2"/>
</dbReference>
<organism>
    <name type="scientific">Rattus norvegicus</name>
    <name type="common">Rat</name>
    <dbReference type="NCBI Taxonomy" id="10116"/>
    <lineage>
        <taxon>Eukaryota</taxon>
        <taxon>Metazoa</taxon>
        <taxon>Chordata</taxon>
        <taxon>Craniata</taxon>
        <taxon>Vertebrata</taxon>
        <taxon>Euteleostomi</taxon>
        <taxon>Mammalia</taxon>
        <taxon>Eutheria</taxon>
        <taxon>Euarchontoglires</taxon>
        <taxon>Glires</taxon>
        <taxon>Rodentia</taxon>
        <taxon>Myomorpha</taxon>
        <taxon>Muroidea</taxon>
        <taxon>Muridae</taxon>
        <taxon>Murinae</taxon>
        <taxon>Rattus</taxon>
    </lineage>
</organism>
<evidence type="ECO:0000250" key="1"/>
<evidence type="ECO:0000250" key="2">
    <source>
        <dbReference type="UniProtKB" id="P14410"/>
    </source>
</evidence>
<evidence type="ECO:0000255" key="3"/>
<evidence type="ECO:0000255" key="4">
    <source>
        <dbReference type="PROSITE-ProRule" id="PRU00779"/>
    </source>
</evidence>
<evidence type="ECO:0000255" key="5">
    <source>
        <dbReference type="PROSITE-ProRule" id="PRU10066"/>
    </source>
</evidence>
<evidence type="ECO:0000256" key="6">
    <source>
        <dbReference type="SAM" id="MobiDB-lite"/>
    </source>
</evidence>
<evidence type="ECO:0000305" key="7"/>
<accession>P23739</accession>
<sequence>MAKKKFSALEISLIVLFIIVTAIAIALVTVLATKVPAVEEIKSPTPTSNSTPTSTPTSTSTPTSTSTPSPGKCPPEQGEPINERINCIPEQHPTKAICEERGCCWRPWNNTVIPWCFFADNHGYNAESITNENAGLKATLNRIPSPTLFGEDIKSVILTTQTQTGNRFRFKITDPNNKRYEVPHQFVKEETGIPAADTLYDVQVSENPFSIKVIRKSNNKVLCDTSVGPLLYSNQYLQISTRLPSEYIYGFGGHIHKRFRHDLYWKTWPIFTRDEIPGDNNHNLYGHQTFFMGIGDTSGKSYGVFLMNSNAMEVFIQPTPIITYRVTGGILDFYIFLGDTPEQVVQQYQEVHWRPAMPAYWNLGFQLSRWNYGSLDTVSEVVRRNREAGIPYDAQVTDIDYMEDHKEFTYDRVKFNGLPEFAQDLHNHGKYIIILDPAISINKRANGAEYQTYVRGNEKNVWVNESDGTTPLIGEVWPGLTVYPDFTNPQTIEWWANECNLFHQQVEYDGLWIDMNEVSSFIQGSLNLKGVLLIVLNYPPFTPGILDKVMYSKTLCMDAVQHWGKQYDVHSLYGYSMAIATEQAVERVFPNKRSFILTRSTFGGSGRHANHWLGDNTASWEQMEWSITGMLEFGIFGMPLVGATSCGFLADTTEELCRRWMQLGAFYPFSRNHNAEGYMEQDPAYFGQDSSRHYLTIRYTLLPFLYTLFYRAHMFGETVARPFLYEFYDDTNSWIEDTQFLWGPALLITPVLRPGVENVSAYIPNATWYDYETGIKRPWRKERINMYLPGDKIGLHLRGGYIIPTQEPDVTTTASRKNPLGLIVALDDNQAAKGELFWDDGESKDSIEKKMYILYTFSVSNNELVLNCTHSSYAEGTSLAFKTIKVLGLREDVRSITVGENDQQMATHTNFTFDSANKILSITALNFNLAGSFIVRWCRTFSDNEKFTCYPDVGTATEGTCTQRGCLWQPVSGLSNVPPYYFPPENNPYTLTSIQPLPTGITAELQLNPPNARIKLPSNPISTLRVGVKYHPNDMLQFKIYDAQHKRYEVPVPLNIPDTPTSSNERLYDVEIKENPFGIQVRRRSSGKLIWDSRLPGFGFNDQFIQISTRLPSNYLYGFGEVEHTAFKRDLNWHTWGMFTRDQPPGYKLNSYGFHPYYMALENEGNAHGVLLLNSNGMDVTFQPTPALTYRTIGGILDFYMFLGPTPEIATRQYHEVIGFPVMPPYWALGFQLCRYGYRNTSEIEQLYNDMVAANIPYDVQYTDINYMERQLDFTIGERFKTLPEFVDRIRKDGMKYIVILAPAISGNETQPYPAFERGIQKDVFVKWPNTNDICWPKVWPDLPNVTIDETITEDEAVNASRAHVAFPDFFRNSTLEWWAREIYDFYNEKMKFDGLWIDMNEPSSFGIQMGGKVLNECRRMMTLNYPPVFSPELRVKEGEGASISEAMCMETEHILIDGSSVLQYDVHNLYGWSQVKPTLDALQNTTGLRGIVISRSTYPTTGRWGGHWLGDNYTTWDNLEKSLIGMLELNLFGIPYIGADICGVFHDSGYPSLYFVGIQVGAFYPYPRESPTINFTRSQDPVSWMKLLLQMSKKVLEIRYTLLPYFYTQMHEAHAHGGTVIRPLMHEFFDDKETWEIYKQFLWGPAFMVTPVVEPFRTSVTGYVPKARWFDYHTGADIKLKGILHTFSAPFDTINLHVRGGYILPCQEPARNTHLSRQNYMKLIVAADDNQMAQGTLFGDDGESIDTYERGQYTSIQFNLNQTTLTSTVLANGYKNKQEMRLGSIHIWGKGTLRISNANLVYGGRKHQPPFTQEEAKETLIFDLKNMNVTLDEPIQITWS</sequence>
<reference key="1">
    <citation type="journal article" date="1994" name="Gene">
        <title>Cloning and sequencing of a full-length rat sucrase-isomaltase-encoding cDNA.</title>
        <authorList>
            <person name="Chandrasena G."/>
            <person name="Osterholm D.E."/>
            <person name="Sunitha I."/>
            <person name="Henning S.J."/>
        </authorList>
    </citation>
    <scope>NUCLEOTIDE SEQUENCE [MRNA]</scope>
    <source>
        <strain>Sprague-Dawley</strain>
        <tissue>Intestine</tissue>
    </source>
</reference>
<reference key="2">
    <citation type="journal article" date="1990" name="Biochem. Biophys. Res. Commun.">
        <title>Regulation of sucrase-isomaltase gene expression along the crypt-villus axis of rat small intestine.</title>
        <authorList>
            <person name="Traber P.G."/>
        </authorList>
    </citation>
    <scope>NUCLEOTIDE SEQUENCE [MRNA] OF 87-362</scope>
    <source>
        <strain>Fischer 344</strain>
        <tissue>Intestine</tissue>
    </source>
</reference>
<reference key="3">
    <citation type="journal article" date="1990" name="Biochim. Biophys. Acta">
        <title>Molecular cloning and characterization of a rat intestinal sucrase-isomaltase cDNA. Regulation of sucrase-isomaltase gene expression by sucrose feeding.</title>
        <authorList>
            <person name="Broyart J.-P."/>
            <person name="Hugot J.-P."/>
            <person name="Perret C."/>
            <person name="Porteu A."/>
        </authorList>
    </citation>
    <scope>NUCLEOTIDE SEQUENCE [MRNA] OF 733-1373</scope>
    <source>
        <strain>Sprague-Dawley</strain>
        <tissue>Duodenum</tissue>
    </source>
</reference>
<reference key="4">
    <citation type="journal article" date="1982" name="J. Biol. Chem.">
        <title>Biosynthesis of sucrase-isomaltase. Purification and NH2-terminal amino acid sequence of the rat sucrase-isomaltase precursor (pro-sucrase-isomaltase) from fetal intestinal transplants.</title>
        <authorList>
            <person name="Hauri H.-P."/>
            <person name="Wacker H."/>
            <person name="Rickli E.E."/>
            <person name="Bigler-Meier B."/>
            <person name="Quaroni A."/>
            <person name="Semenza G."/>
        </authorList>
    </citation>
    <scope>PROTEIN SEQUENCE OF N-TERMINUS OF ISOMALTASE AND SUCRASE</scope>
</reference>
<proteinExistence type="evidence at protein level"/>
<protein>
    <recommendedName>
        <fullName>Sucrase-isomaltase, intestinal</fullName>
    </recommendedName>
    <component>
        <recommendedName>
            <fullName>Sucrase</fullName>
            <ecNumber>3.2.1.48</ecNumber>
        </recommendedName>
    </component>
    <component>
        <recommendedName>
            <fullName>Isomaltase</fullName>
            <ecNumber>3.2.1.10</ecNumber>
        </recommendedName>
    </component>
</protein>